<gene>
    <name evidence="1" type="primary">nuoN</name>
    <name type="ordered locus">Ecok1_21700</name>
    <name type="ORF">APECO1_4289</name>
</gene>
<evidence type="ECO:0000255" key="1">
    <source>
        <dbReference type="HAMAP-Rule" id="MF_00445"/>
    </source>
</evidence>
<reference key="1">
    <citation type="journal article" date="2007" name="J. Bacteriol.">
        <title>The genome sequence of avian pathogenic Escherichia coli strain O1:K1:H7 shares strong similarities with human extraintestinal pathogenic E. coli genomes.</title>
        <authorList>
            <person name="Johnson T.J."/>
            <person name="Kariyawasam S."/>
            <person name="Wannemuehler Y."/>
            <person name="Mangiamele P."/>
            <person name="Johnson S.J."/>
            <person name="Doetkott C."/>
            <person name="Skyberg J.A."/>
            <person name="Lynne A.M."/>
            <person name="Johnson J.R."/>
            <person name="Nolan L.K."/>
        </authorList>
    </citation>
    <scope>NUCLEOTIDE SEQUENCE [LARGE SCALE GENOMIC DNA]</scope>
</reference>
<sequence length="485" mass="52072">MTITPQNLIALLPLLIVGLTVVVVMLSIAWRRNHFLNATLSVIGLNAALVSLWFVGQAGAMDVTPLMRVDGFAMLYTGLVLLASLATCTFAYPWLEGYNDNKDEFYLLVLIAALGGILLANANHLASLFLGIELISLPLFGLVGYAFRQKRSLEASIKYTILSAAASSFLLFGMALVYAQSGDLSFVALGKNLGDGMLNEPLLLAGFGLMIVGLGFKLSLVPFHLWTPDVYQGAPAPVSTFLATASKIAIFGVVMRLFLYAPVGDSEAIRVVLAIIAFASIIFGNLMALSQTNIKRLLGYSSISHLGYLLVALIALQTGEMSMEAVGVYLVGYLFSSLGAFGVVSLMSSPYRGPDADSLFSYRGLFWHRPILAAVMTVMMLSLAGIPMTLGFIGKFYVLAVGVQAHLWWLVGAVVVGSAIGLYYYLRVAVSLYLHAPEQPGRDAPSNWQYSAGGIVVLISALLVLVLGVWPQPLISIVRLAMPLM</sequence>
<accession>A1ADC4</accession>
<proteinExistence type="inferred from homology"/>
<keyword id="KW-0997">Cell inner membrane</keyword>
<keyword id="KW-1003">Cell membrane</keyword>
<keyword id="KW-0472">Membrane</keyword>
<keyword id="KW-0520">NAD</keyword>
<keyword id="KW-0874">Quinone</keyword>
<keyword id="KW-1185">Reference proteome</keyword>
<keyword id="KW-1278">Translocase</keyword>
<keyword id="KW-0812">Transmembrane</keyword>
<keyword id="KW-1133">Transmembrane helix</keyword>
<keyword id="KW-0813">Transport</keyword>
<keyword id="KW-0830">Ubiquinone</keyword>
<name>NUON_ECOK1</name>
<organism>
    <name type="scientific">Escherichia coli O1:K1 / APEC</name>
    <dbReference type="NCBI Taxonomy" id="405955"/>
    <lineage>
        <taxon>Bacteria</taxon>
        <taxon>Pseudomonadati</taxon>
        <taxon>Pseudomonadota</taxon>
        <taxon>Gammaproteobacteria</taxon>
        <taxon>Enterobacterales</taxon>
        <taxon>Enterobacteriaceae</taxon>
        <taxon>Escherichia</taxon>
    </lineage>
</organism>
<protein>
    <recommendedName>
        <fullName evidence="1">NADH-quinone oxidoreductase subunit N</fullName>
        <ecNumber evidence="1">7.1.1.-</ecNumber>
    </recommendedName>
    <alternativeName>
        <fullName evidence="1">NADH dehydrogenase I subunit N</fullName>
    </alternativeName>
    <alternativeName>
        <fullName evidence="1">NDH-1 subunit N</fullName>
    </alternativeName>
</protein>
<comment type="function">
    <text evidence="1">NDH-1 shuttles electrons from NADH, via FMN and iron-sulfur (Fe-S) centers, to quinones in the respiratory chain. The immediate electron acceptor for the enzyme in this species is believed to be ubiquinone. Couples the redox reaction to proton translocation (for every two electrons transferred, four hydrogen ions are translocated across the cytoplasmic membrane), and thus conserves the redox energy in a proton gradient.</text>
</comment>
<comment type="catalytic activity">
    <reaction evidence="1">
        <text>a quinone + NADH + 5 H(+)(in) = a quinol + NAD(+) + 4 H(+)(out)</text>
        <dbReference type="Rhea" id="RHEA:57888"/>
        <dbReference type="ChEBI" id="CHEBI:15378"/>
        <dbReference type="ChEBI" id="CHEBI:24646"/>
        <dbReference type="ChEBI" id="CHEBI:57540"/>
        <dbReference type="ChEBI" id="CHEBI:57945"/>
        <dbReference type="ChEBI" id="CHEBI:132124"/>
    </reaction>
</comment>
<comment type="subunit">
    <text evidence="1">NDH-1 is composed of 13 different subunits. Subunits NuoA, H, J, K, L, M, N constitute the membrane sector of the complex.</text>
</comment>
<comment type="subcellular location">
    <subcellularLocation>
        <location evidence="1">Cell inner membrane</location>
        <topology evidence="1">Multi-pass membrane protein</topology>
    </subcellularLocation>
</comment>
<comment type="similarity">
    <text evidence="1">Belongs to the complex I subunit 2 family.</text>
</comment>
<feature type="chain" id="PRO_1000017376" description="NADH-quinone oxidoreductase subunit N">
    <location>
        <begin position="1"/>
        <end position="485"/>
    </location>
</feature>
<feature type="transmembrane region" description="Helical" evidence="1">
    <location>
        <begin position="8"/>
        <end position="28"/>
    </location>
</feature>
<feature type="transmembrane region" description="Helical" evidence="1">
    <location>
        <begin position="35"/>
        <end position="55"/>
    </location>
</feature>
<feature type="transmembrane region" description="Helical" evidence="1">
    <location>
        <begin position="71"/>
        <end position="91"/>
    </location>
</feature>
<feature type="transmembrane region" description="Helical" evidence="1">
    <location>
        <begin position="105"/>
        <end position="125"/>
    </location>
</feature>
<feature type="transmembrane region" description="Helical" evidence="1">
    <location>
        <begin position="127"/>
        <end position="147"/>
    </location>
</feature>
<feature type="transmembrane region" description="Helical" evidence="1">
    <location>
        <begin position="159"/>
        <end position="179"/>
    </location>
</feature>
<feature type="transmembrane region" description="Helical" evidence="1">
    <location>
        <begin position="203"/>
        <end position="223"/>
    </location>
</feature>
<feature type="transmembrane region" description="Helical" evidence="1">
    <location>
        <begin position="235"/>
        <end position="255"/>
    </location>
</feature>
<feature type="transmembrane region" description="Helical" evidence="1">
    <location>
        <begin position="271"/>
        <end position="291"/>
    </location>
</feature>
<feature type="transmembrane region" description="Helical" evidence="1">
    <location>
        <begin position="297"/>
        <end position="317"/>
    </location>
</feature>
<feature type="transmembrane region" description="Helical" evidence="1">
    <location>
        <begin position="326"/>
        <end position="346"/>
    </location>
</feature>
<feature type="transmembrane region" description="Helical" evidence="1">
    <location>
        <begin position="373"/>
        <end position="393"/>
    </location>
</feature>
<feature type="transmembrane region" description="Helical" evidence="1">
    <location>
        <begin position="408"/>
        <end position="430"/>
    </location>
</feature>
<feature type="transmembrane region" description="Helical" evidence="1">
    <location>
        <begin position="455"/>
        <end position="475"/>
    </location>
</feature>
<dbReference type="EC" id="7.1.1.-" evidence="1"/>
<dbReference type="EMBL" id="CP000468">
    <property type="protein sequence ID" value="ABJ01664.1"/>
    <property type="molecule type" value="Genomic_DNA"/>
</dbReference>
<dbReference type="RefSeq" id="WP_000156712.1">
    <property type="nucleotide sequence ID" value="NZ_CADILS010000025.1"/>
</dbReference>
<dbReference type="SMR" id="A1ADC4"/>
<dbReference type="KEGG" id="ecv:APECO1_4289"/>
<dbReference type="HOGENOM" id="CLU_007100_1_5_6"/>
<dbReference type="Proteomes" id="UP000008216">
    <property type="component" value="Chromosome"/>
</dbReference>
<dbReference type="GO" id="GO:0005886">
    <property type="term" value="C:plasma membrane"/>
    <property type="evidence" value="ECO:0007669"/>
    <property type="project" value="UniProtKB-SubCell"/>
</dbReference>
<dbReference type="GO" id="GO:0008137">
    <property type="term" value="F:NADH dehydrogenase (ubiquinone) activity"/>
    <property type="evidence" value="ECO:0007669"/>
    <property type="project" value="InterPro"/>
</dbReference>
<dbReference type="GO" id="GO:0050136">
    <property type="term" value="F:NADH:ubiquinone reductase (non-electrogenic) activity"/>
    <property type="evidence" value="ECO:0007669"/>
    <property type="project" value="UniProtKB-UniRule"/>
</dbReference>
<dbReference type="GO" id="GO:0048038">
    <property type="term" value="F:quinone binding"/>
    <property type="evidence" value="ECO:0007669"/>
    <property type="project" value="UniProtKB-KW"/>
</dbReference>
<dbReference type="GO" id="GO:0042773">
    <property type="term" value="P:ATP synthesis coupled electron transport"/>
    <property type="evidence" value="ECO:0007669"/>
    <property type="project" value="InterPro"/>
</dbReference>
<dbReference type="HAMAP" id="MF_00445">
    <property type="entry name" value="NDH1_NuoN_1"/>
    <property type="match status" value="1"/>
</dbReference>
<dbReference type="InterPro" id="IPR010096">
    <property type="entry name" value="NADH-Q_OxRdtase_suN/2"/>
</dbReference>
<dbReference type="InterPro" id="IPR001750">
    <property type="entry name" value="ND/Mrp_TM"/>
</dbReference>
<dbReference type="NCBIfam" id="TIGR01770">
    <property type="entry name" value="NDH_I_N"/>
    <property type="match status" value="1"/>
</dbReference>
<dbReference type="NCBIfam" id="NF004439">
    <property type="entry name" value="PRK05777.1-1"/>
    <property type="match status" value="1"/>
</dbReference>
<dbReference type="PANTHER" id="PTHR22773">
    <property type="entry name" value="NADH DEHYDROGENASE"/>
    <property type="match status" value="1"/>
</dbReference>
<dbReference type="Pfam" id="PF00361">
    <property type="entry name" value="Proton_antipo_M"/>
    <property type="match status" value="1"/>
</dbReference>